<protein>
    <recommendedName>
        <fullName evidence="3">Small ribosomal subunit protein eS28</fullName>
    </recommendedName>
    <alternativeName>
        <fullName>40S ribosomal protein S28</fullName>
    </alternativeName>
</protein>
<gene>
    <name type="primary">RpS28</name>
</gene>
<dbReference type="EMBL" id="AY583363">
    <property type="protein sequence ID" value="AAS93683.1"/>
    <property type="molecule type" value="mRNA"/>
</dbReference>
<dbReference type="RefSeq" id="NP_001037680.1">
    <property type="nucleotide sequence ID" value="NM_001044215.1"/>
</dbReference>
<dbReference type="SMR" id="Q6PS50"/>
<dbReference type="FunCoup" id="Q6PS50">
    <property type="interactions" value="875"/>
</dbReference>
<dbReference type="STRING" id="7091.Q6PS50"/>
<dbReference type="PaxDb" id="7091-BGIBMGA011948-TA"/>
<dbReference type="EnsemblMetazoa" id="NM_001044215.1">
    <property type="protein sequence ID" value="NP_001037680.1"/>
    <property type="gene ID" value="GeneID_733144"/>
</dbReference>
<dbReference type="GeneID" id="733144"/>
<dbReference type="KEGG" id="bmor:733144"/>
<dbReference type="CTD" id="31897"/>
<dbReference type="eggNOG" id="KOG3502">
    <property type="taxonomic scope" value="Eukaryota"/>
</dbReference>
<dbReference type="HOGENOM" id="CLU_178987_1_0_1"/>
<dbReference type="InParanoid" id="Q6PS50"/>
<dbReference type="OMA" id="SCSIIHN"/>
<dbReference type="OrthoDB" id="515992at7088"/>
<dbReference type="Proteomes" id="UP000005204">
    <property type="component" value="Unassembled WGS sequence"/>
</dbReference>
<dbReference type="GO" id="GO:0098556">
    <property type="term" value="C:cytoplasmic side of rough endoplasmic reticulum membrane"/>
    <property type="evidence" value="ECO:0000250"/>
    <property type="project" value="UniProtKB"/>
</dbReference>
<dbReference type="GO" id="GO:0022627">
    <property type="term" value="C:cytosolic small ribosomal subunit"/>
    <property type="evidence" value="ECO:0000250"/>
    <property type="project" value="UniProtKB"/>
</dbReference>
<dbReference type="GO" id="GO:0005840">
    <property type="term" value="C:ribosome"/>
    <property type="evidence" value="ECO:0000250"/>
    <property type="project" value="UniProtKB"/>
</dbReference>
<dbReference type="GO" id="GO:0003735">
    <property type="term" value="F:structural constituent of ribosome"/>
    <property type="evidence" value="ECO:0007669"/>
    <property type="project" value="InterPro"/>
</dbReference>
<dbReference type="GO" id="GO:0002181">
    <property type="term" value="P:cytoplasmic translation"/>
    <property type="evidence" value="ECO:0000250"/>
    <property type="project" value="UniProtKB"/>
</dbReference>
<dbReference type="GO" id="GO:0030490">
    <property type="term" value="P:maturation of SSU-rRNA"/>
    <property type="evidence" value="ECO:0007669"/>
    <property type="project" value="TreeGrafter"/>
</dbReference>
<dbReference type="GO" id="GO:0000028">
    <property type="term" value="P:ribosomal small subunit assembly"/>
    <property type="evidence" value="ECO:0007669"/>
    <property type="project" value="TreeGrafter"/>
</dbReference>
<dbReference type="CDD" id="cd04457">
    <property type="entry name" value="S1_S28E"/>
    <property type="match status" value="1"/>
</dbReference>
<dbReference type="FunFam" id="2.40.50.140:FF:000025">
    <property type="entry name" value="40S ribosomal protein S28"/>
    <property type="match status" value="1"/>
</dbReference>
<dbReference type="Gene3D" id="2.40.50.140">
    <property type="entry name" value="Nucleic acid-binding proteins"/>
    <property type="match status" value="1"/>
</dbReference>
<dbReference type="HAMAP" id="MF_00292">
    <property type="entry name" value="Ribosomal_eS28"/>
    <property type="match status" value="1"/>
</dbReference>
<dbReference type="InterPro" id="IPR012340">
    <property type="entry name" value="NA-bd_OB-fold"/>
</dbReference>
<dbReference type="InterPro" id="IPR000289">
    <property type="entry name" value="Ribosomal_eS28"/>
</dbReference>
<dbReference type="InterPro" id="IPR028626">
    <property type="entry name" value="Ribosomal_eS28_CS"/>
</dbReference>
<dbReference type="PANTHER" id="PTHR10769">
    <property type="entry name" value="40S RIBOSOMAL PROTEIN S28"/>
    <property type="match status" value="1"/>
</dbReference>
<dbReference type="PANTHER" id="PTHR10769:SF3">
    <property type="entry name" value="SMALL RIBOSOMAL SUBUNIT PROTEIN ES28"/>
    <property type="match status" value="1"/>
</dbReference>
<dbReference type="Pfam" id="PF01200">
    <property type="entry name" value="Ribosomal_S28e"/>
    <property type="match status" value="1"/>
</dbReference>
<dbReference type="SUPFAM" id="SSF50249">
    <property type="entry name" value="Nucleic acid-binding proteins"/>
    <property type="match status" value="1"/>
</dbReference>
<dbReference type="PROSITE" id="PS00961">
    <property type="entry name" value="RIBOSOMAL_S28E"/>
    <property type="match status" value="1"/>
</dbReference>
<accession>Q6PS50</accession>
<comment type="subunit">
    <text evidence="2">Component of the 40S small ribosomal subunit.</text>
</comment>
<comment type="subcellular location">
    <subcellularLocation>
        <location evidence="1">Cytoplasm</location>
        <location evidence="1">Cytosol</location>
    </subcellularLocation>
    <subcellularLocation>
        <location evidence="1">Cytoplasm</location>
    </subcellularLocation>
    <subcellularLocation>
        <location evidence="2">Rough endoplasmic reticulum</location>
    </subcellularLocation>
    <text evidence="1 2">Detected on cytosolic polysomes (By similarity). Detected in ribosomes that are associated with the rough endoplasmic reticulum (By similarity).</text>
</comment>
<comment type="similarity">
    <text evidence="3">Belongs to the eukaryotic ribosomal protein eS28 family.</text>
</comment>
<evidence type="ECO:0000250" key="1">
    <source>
        <dbReference type="UniProtKB" id="P62857"/>
    </source>
</evidence>
<evidence type="ECO:0000250" key="2">
    <source>
        <dbReference type="UniProtKB" id="Q6QAT1"/>
    </source>
</evidence>
<evidence type="ECO:0000305" key="3"/>
<keyword id="KW-0963">Cytoplasm</keyword>
<keyword id="KW-0256">Endoplasmic reticulum</keyword>
<keyword id="KW-1185">Reference proteome</keyword>
<keyword id="KW-0687">Ribonucleoprotein</keyword>
<keyword id="KW-0689">Ribosomal protein</keyword>
<proteinExistence type="inferred from homology"/>
<name>RS28_BOMMO</name>
<sequence length="65" mass="7318">MDKPNVLARVVKVLGRTGSQGQCTQVKVEFIGETSRQIIRNVKGPVRDGDILTLLESEREARRLR</sequence>
<feature type="chain" id="PRO_0000136830" description="Small ribosomal subunit protein eS28">
    <location>
        <begin position="1"/>
        <end position="65"/>
    </location>
</feature>
<organism>
    <name type="scientific">Bombyx mori</name>
    <name type="common">Silk moth</name>
    <dbReference type="NCBI Taxonomy" id="7091"/>
    <lineage>
        <taxon>Eukaryota</taxon>
        <taxon>Metazoa</taxon>
        <taxon>Ecdysozoa</taxon>
        <taxon>Arthropoda</taxon>
        <taxon>Hexapoda</taxon>
        <taxon>Insecta</taxon>
        <taxon>Pterygota</taxon>
        <taxon>Neoptera</taxon>
        <taxon>Endopterygota</taxon>
        <taxon>Lepidoptera</taxon>
        <taxon>Glossata</taxon>
        <taxon>Ditrysia</taxon>
        <taxon>Bombycoidea</taxon>
        <taxon>Bombycidae</taxon>
        <taxon>Bombycinae</taxon>
        <taxon>Bombyx</taxon>
    </lineage>
</organism>
<reference key="1">
    <citation type="submission" date="2004-03" db="EMBL/GenBank/DDBJ databases">
        <title>Full-length ribosomal protein sequence from an EST library of Bombyx mori.</title>
        <authorList>
            <person name="Hong S.M."/>
            <person name="Kang S.W."/>
            <person name="Kim N.S."/>
            <person name="Lee J.S."/>
            <person name="Eum J.H."/>
            <person name="Nho S.K."/>
        </authorList>
    </citation>
    <scope>NUCLEOTIDE SEQUENCE [MRNA]</scope>
    <source>
        <strain>Kl20</strain>
        <tissue>Brain</tissue>
    </source>
</reference>